<evidence type="ECO:0000255" key="1">
    <source>
        <dbReference type="HAMAP-Rule" id="MF_00422"/>
    </source>
</evidence>
<dbReference type="EMBL" id="CP000678">
    <property type="protein sequence ID" value="ABQ86830.1"/>
    <property type="molecule type" value="Genomic_DNA"/>
</dbReference>
<dbReference type="RefSeq" id="WP_004032378.1">
    <property type="nucleotide sequence ID" value="NZ_CP117965.1"/>
</dbReference>
<dbReference type="SMR" id="A5UKV2"/>
<dbReference type="STRING" id="420247.Msm_0625"/>
<dbReference type="EnsemblBacteria" id="ABQ86830">
    <property type="protein sequence ID" value="ABQ86830"/>
    <property type="gene ID" value="Msm_0625"/>
</dbReference>
<dbReference type="KEGG" id="msi:Msm_0625"/>
<dbReference type="PATRIC" id="fig|420247.28.peg.622"/>
<dbReference type="eggNOG" id="arCOG02204">
    <property type="taxonomic scope" value="Archaea"/>
</dbReference>
<dbReference type="HOGENOM" id="CLU_191921_0_1_2"/>
<dbReference type="Proteomes" id="UP000001992">
    <property type="component" value="Chromosome"/>
</dbReference>
<dbReference type="GO" id="GO:0005886">
    <property type="term" value="C:plasma membrane"/>
    <property type="evidence" value="ECO:0007669"/>
    <property type="project" value="UniProtKB-SubCell"/>
</dbReference>
<dbReference type="GO" id="GO:0008320">
    <property type="term" value="F:protein transmembrane transporter activity"/>
    <property type="evidence" value="ECO:0007669"/>
    <property type="project" value="UniProtKB-UniRule"/>
</dbReference>
<dbReference type="GO" id="GO:0065002">
    <property type="term" value="P:intracellular protein transmembrane transport"/>
    <property type="evidence" value="ECO:0007669"/>
    <property type="project" value="UniProtKB-UniRule"/>
</dbReference>
<dbReference type="GO" id="GO:0009306">
    <property type="term" value="P:protein secretion"/>
    <property type="evidence" value="ECO:0007669"/>
    <property type="project" value="UniProtKB-UniRule"/>
</dbReference>
<dbReference type="GO" id="GO:0006605">
    <property type="term" value="P:protein targeting"/>
    <property type="evidence" value="ECO:0007669"/>
    <property type="project" value="UniProtKB-UniRule"/>
</dbReference>
<dbReference type="Gene3D" id="1.20.5.820">
    <property type="entry name" value="Preprotein translocase SecE subunit"/>
    <property type="match status" value="1"/>
</dbReference>
<dbReference type="HAMAP" id="MF_00422">
    <property type="entry name" value="SecE"/>
    <property type="match status" value="1"/>
</dbReference>
<dbReference type="InterPro" id="IPR023391">
    <property type="entry name" value="Prot_translocase_SecE_dom_sf"/>
</dbReference>
<dbReference type="InterPro" id="IPR008158">
    <property type="entry name" value="Translocase_Sec61-g"/>
</dbReference>
<dbReference type="InterPro" id="IPR001901">
    <property type="entry name" value="Translocase_SecE/Sec61-g"/>
</dbReference>
<dbReference type="NCBIfam" id="NF006909">
    <property type="entry name" value="PRK09400.1-4"/>
    <property type="match status" value="1"/>
</dbReference>
<dbReference type="NCBIfam" id="TIGR00327">
    <property type="entry name" value="secE_euk_arch"/>
    <property type="match status" value="1"/>
</dbReference>
<dbReference type="Pfam" id="PF00584">
    <property type="entry name" value="SecE"/>
    <property type="match status" value="1"/>
</dbReference>
<dbReference type="SUPFAM" id="SSF103456">
    <property type="entry name" value="Preprotein translocase SecE subunit"/>
    <property type="match status" value="1"/>
</dbReference>
<sequence length="59" mass="6646">MNVQERFDKTIKDCKRVLKVSRKPDKQEYLEFSKIVAIGIAIIGVVGFIIVLIGELIGL</sequence>
<comment type="function">
    <text evidence="1">Essential subunit of the Sec protein translocation channel SecYEG. Clamps together the 2 halves of SecY. May contact the channel plug during translocation.</text>
</comment>
<comment type="subunit">
    <text evidence="1">Component of the Sec protein translocase complex. Heterotrimer consisting of SecY (alpha), SecG (beta) and SecE (gamma) subunits. The heterotrimers can form oligomers, although 1 heterotrimer is thought to be able to translocate proteins. Interacts with the ribosome. May interact with SecDF, and other proteins may be involved.</text>
</comment>
<comment type="subcellular location">
    <subcellularLocation>
        <location evidence="1">Cell membrane</location>
        <topology evidence="1">Single-pass membrane protein</topology>
    </subcellularLocation>
</comment>
<comment type="similarity">
    <text evidence="1">Belongs to the SecE/SEC61-gamma family.</text>
</comment>
<accession>A5UKV2</accession>
<protein>
    <recommendedName>
        <fullName evidence="1">Protein translocase subunit SecE</fullName>
    </recommendedName>
    <alternativeName>
        <fullName evidence="1">Protein transport protein Sec61 gamma subunit homolog</fullName>
    </alternativeName>
</protein>
<feature type="chain" id="PRO_1000050353" description="Protein translocase subunit SecE">
    <location>
        <begin position="1"/>
        <end position="59"/>
    </location>
</feature>
<feature type="transmembrane region" description="Helical" evidence="1">
    <location>
        <begin position="35"/>
        <end position="55"/>
    </location>
</feature>
<gene>
    <name evidence="1" type="primary">secE</name>
    <name type="ordered locus">Msm_0625</name>
</gene>
<reference key="1">
    <citation type="journal article" date="2007" name="Proc. Natl. Acad. Sci. U.S.A.">
        <title>Genomic and metabolic adaptations of Methanobrevibacter smithii to the human gut.</title>
        <authorList>
            <person name="Samuel B.S."/>
            <person name="Hansen E.E."/>
            <person name="Manchester J.K."/>
            <person name="Coutinho P.M."/>
            <person name="Henrissat B."/>
            <person name="Fulton R."/>
            <person name="Latreille P."/>
            <person name="Kim K."/>
            <person name="Wilson R.K."/>
            <person name="Gordon J.I."/>
        </authorList>
    </citation>
    <scope>NUCLEOTIDE SEQUENCE [LARGE SCALE GENOMIC DNA]</scope>
    <source>
        <strain>ATCC 35061 / DSM 861 / OCM 144 / PS</strain>
    </source>
</reference>
<proteinExistence type="inferred from homology"/>
<organism>
    <name type="scientific">Methanobrevibacter smithii (strain ATCC 35061 / DSM 861 / OCM 144 / PS)</name>
    <dbReference type="NCBI Taxonomy" id="420247"/>
    <lineage>
        <taxon>Archaea</taxon>
        <taxon>Methanobacteriati</taxon>
        <taxon>Methanobacteriota</taxon>
        <taxon>Methanomada group</taxon>
        <taxon>Methanobacteria</taxon>
        <taxon>Methanobacteriales</taxon>
        <taxon>Methanobacteriaceae</taxon>
        <taxon>Methanobrevibacter</taxon>
    </lineage>
</organism>
<name>SECE_METS3</name>
<keyword id="KW-1003">Cell membrane</keyword>
<keyword id="KW-0472">Membrane</keyword>
<keyword id="KW-0653">Protein transport</keyword>
<keyword id="KW-0811">Translocation</keyword>
<keyword id="KW-0812">Transmembrane</keyword>
<keyword id="KW-1133">Transmembrane helix</keyword>
<keyword id="KW-0813">Transport</keyword>